<evidence type="ECO:0000255" key="1">
    <source>
        <dbReference type="HAMAP-Rule" id="MF_01431"/>
    </source>
</evidence>
<sequence length="311" mass="33775">MALPIIIDCDPGHDDAIALVLALASPELEVKAITSSAGNQTPEKTLRNVLRMLTLLKRPDIPVAGGAVKPLMRELIIADNVHGESGLDGPALPEPSFAPQSGTAVELMAKTLRESAQPVTIVSTGPQTNVALLLNSHPELHTKIARIVIMGGAMGLGNWTPAAEFNIYVDPEAAEIVFQSGIPVVMAGLDVTHKAQIHAADIERFRDIGNPISTIVAELLDFFFEYHKDEKWGFVGAPLHAPCTIAWLLKPEIFTTVERWVGVETKGKYTQGMTVVDYYFLTGNKPNATVMVDVDRQGFVDLLAERLQYYA</sequence>
<dbReference type="EC" id="3.2.-.-" evidence="1"/>
<dbReference type="EMBL" id="AE017220">
    <property type="protein sequence ID" value="AAX64595.1"/>
    <property type="molecule type" value="Genomic_DNA"/>
</dbReference>
<dbReference type="RefSeq" id="WP_001539456.1">
    <property type="nucleotide sequence ID" value="NC_006905.1"/>
</dbReference>
<dbReference type="SMR" id="Q57RR6"/>
<dbReference type="KEGG" id="sec:SCH_0689"/>
<dbReference type="HOGENOM" id="CLU_036838_2_0_6"/>
<dbReference type="Proteomes" id="UP000000538">
    <property type="component" value="Chromosome"/>
</dbReference>
<dbReference type="GO" id="GO:0005829">
    <property type="term" value="C:cytosol"/>
    <property type="evidence" value="ECO:0007669"/>
    <property type="project" value="TreeGrafter"/>
</dbReference>
<dbReference type="GO" id="GO:0008477">
    <property type="term" value="F:purine nucleosidase activity"/>
    <property type="evidence" value="ECO:0007669"/>
    <property type="project" value="TreeGrafter"/>
</dbReference>
<dbReference type="GO" id="GO:0045437">
    <property type="term" value="F:uridine nucleosidase activity"/>
    <property type="evidence" value="ECO:0007669"/>
    <property type="project" value="InterPro"/>
</dbReference>
<dbReference type="GO" id="GO:0015949">
    <property type="term" value="P:nucleobase-containing small molecule interconversion"/>
    <property type="evidence" value="ECO:0007669"/>
    <property type="project" value="InterPro"/>
</dbReference>
<dbReference type="GO" id="GO:0006152">
    <property type="term" value="P:purine nucleoside catabolic process"/>
    <property type="evidence" value="ECO:0007669"/>
    <property type="project" value="TreeGrafter"/>
</dbReference>
<dbReference type="GO" id="GO:0006206">
    <property type="term" value="P:pyrimidine nucleobase metabolic process"/>
    <property type="evidence" value="ECO:0007669"/>
    <property type="project" value="UniProtKB-UniRule"/>
</dbReference>
<dbReference type="CDD" id="cd02651">
    <property type="entry name" value="nuc_hydro_IU_UC_XIUA"/>
    <property type="match status" value="1"/>
</dbReference>
<dbReference type="FunFam" id="3.90.245.10:FF:000001">
    <property type="entry name" value="Pyrimidine-specific ribonucleoside hydrolase RihA"/>
    <property type="match status" value="1"/>
</dbReference>
<dbReference type="Gene3D" id="3.90.245.10">
    <property type="entry name" value="Ribonucleoside hydrolase-like"/>
    <property type="match status" value="1"/>
</dbReference>
<dbReference type="HAMAP" id="MF_01431">
    <property type="entry name" value="Pyrim_hydro_RihA"/>
    <property type="match status" value="1"/>
</dbReference>
<dbReference type="InterPro" id="IPR015910">
    <property type="entry name" value="I/U_nuclsd_hydro_CS"/>
</dbReference>
<dbReference type="InterPro" id="IPR001910">
    <property type="entry name" value="Inosine/uridine_hydrolase_dom"/>
</dbReference>
<dbReference type="InterPro" id="IPR023186">
    <property type="entry name" value="IUNH"/>
</dbReference>
<dbReference type="InterPro" id="IPR022975">
    <property type="entry name" value="Pyrim_hydro_RihA"/>
</dbReference>
<dbReference type="InterPro" id="IPR036452">
    <property type="entry name" value="Ribo_hydro-like"/>
</dbReference>
<dbReference type="NCBIfam" id="NF007761">
    <property type="entry name" value="PRK10443.1"/>
    <property type="match status" value="1"/>
</dbReference>
<dbReference type="PANTHER" id="PTHR12304">
    <property type="entry name" value="INOSINE-URIDINE PREFERRING NUCLEOSIDE HYDROLASE"/>
    <property type="match status" value="1"/>
</dbReference>
<dbReference type="PANTHER" id="PTHR12304:SF4">
    <property type="entry name" value="URIDINE NUCLEOSIDASE"/>
    <property type="match status" value="1"/>
</dbReference>
<dbReference type="Pfam" id="PF01156">
    <property type="entry name" value="IU_nuc_hydro"/>
    <property type="match status" value="1"/>
</dbReference>
<dbReference type="SUPFAM" id="SSF53590">
    <property type="entry name" value="Nucleoside hydrolase"/>
    <property type="match status" value="1"/>
</dbReference>
<dbReference type="PROSITE" id="PS01247">
    <property type="entry name" value="IUNH"/>
    <property type="match status" value="1"/>
</dbReference>
<reference key="1">
    <citation type="journal article" date="2005" name="Nucleic Acids Res.">
        <title>The genome sequence of Salmonella enterica serovar Choleraesuis, a highly invasive and resistant zoonotic pathogen.</title>
        <authorList>
            <person name="Chiu C.-H."/>
            <person name="Tang P."/>
            <person name="Chu C."/>
            <person name="Hu S."/>
            <person name="Bao Q."/>
            <person name="Yu J."/>
            <person name="Chou Y.-Y."/>
            <person name="Wang H.-S."/>
            <person name="Lee Y.-S."/>
        </authorList>
    </citation>
    <scope>NUCLEOTIDE SEQUENCE [LARGE SCALE GENOMIC DNA]</scope>
    <source>
        <strain>SC-B67</strain>
    </source>
</reference>
<accession>Q57RR6</accession>
<gene>
    <name evidence="1" type="primary">rihA</name>
    <name type="ordered locus">SCH_0689</name>
</gene>
<comment type="function">
    <text evidence="1">Hydrolyzes cytidine or uridine to ribose and cytosine or uracil, respectively.</text>
</comment>
<comment type="similarity">
    <text evidence="1">Belongs to the IUNH family. RihA subfamily.</text>
</comment>
<name>RIHA_SALCH</name>
<feature type="chain" id="PRO_0000206817" description="Pyrimidine-specific ribonucleoside hydrolase RihA">
    <location>
        <begin position="1"/>
        <end position="311"/>
    </location>
</feature>
<feature type="active site" evidence="1">
    <location>
        <position position="240"/>
    </location>
</feature>
<proteinExistence type="inferred from homology"/>
<protein>
    <recommendedName>
        <fullName evidence="1">Pyrimidine-specific ribonucleoside hydrolase RihA</fullName>
        <ecNumber evidence="1">3.2.-.-</ecNumber>
    </recommendedName>
    <alternativeName>
        <fullName evidence="1">Cytidine/uridine-specific hydrolase</fullName>
    </alternativeName>
</protein>
<organism>
    <name type="scientific">Salmonella choleraesuis (strain SC-B67)</name>
    <dbReference type="NCBI Taxonomy" id="321314"/>
    <lineage>
        <taxon>Bacteria</taxon>
        <taxon>Pseudomonadati</taxon>
        <taxon>Pseudomonadota</taxon>
        <taxon>Gammaproteobacteria</taxon>
        <taxon>Enterobacterales</taxon>
        <taxon>Enterobacteriaceae</taxon>
        <taxon>Salmonella</taxon>
    </lineage>
</organism>
<keyword id="KW-0326">Glycosidase</keyword>
<keyword id="KW-0378">Hydrolase</keyword>